<reference key="1">
    <citation type="journal article" date="1998" name="Nature">
        <title>Deciphering the biology of Mycobacterium tuberculosis from the complete genome sequence.</title>
        <authorList>
            <person name="Cole S.T."/>
            <person name="Brosch R."/>
            <person name="Parkhill J."/>
            <person name="Garnier T."/>
            <person name="Churcher C.M."/>
            <person name="Harris D.E."/>
            <person name="Gordon S.V."/>
            <person name="Eiglmeier K."/>
            <person name="Gas S."/>
            <person name="Barry C.E. III"/>
            <person name="Tekaia F."/>
            <person name="Badcock K."/>
            <person name="Basham D."/>
            <person name="Brown D."/>
            <person name="Chillingworth T."/>
            <person name="Connor R."/>
            <person name="Davies R.M."/>
            <person name="Devlin K."/>
            <person name="Feltwell T."/>
            <person name="Gentles S."/>
            <person name="Hamlin N."/>
            <person name="Holroyd S."/>
            <person name="Hornsby T."/>
            <person name="Jagels K."/>
            <person name="Krogh A."/>
            <person name="McLean J."/>
            <person name="Moule S."/>
            <person name="Murphy L.D."/>
            <person name="Oliver S."/>
            <person name="Osborne J."/>
            <person name="Quail M.A."/>
            <person name="Rajandream M.A."/>
            <person name="Rogers J."/>
            <person name="Rutter S."/>
            <person name="Seeger K."/>
            <person name="Skelton S."/>
            <person name="Squares S."/>
            <person name="Squares R."/>
            <person name="Sulston J.E."/>
            <person name="Taylor K."/>
            <person name="Whitehead S."/>
            <person name="Barrell B.G."/>
        </authorList>
    </citation>
    <scope>NUCLEOTIDE SEQUENCE [LARGE SCALE GENOMIC DNA]</scope>
    <source>
        <strain>ATCC 25618 / H37Rv</strain>
    </source>
</reference>
<accession>P9WHX1</accession>
<accession>L0TGL5</accession>
<accession>Q79FA3</accession>
<gene>
    <name type="primary">PPE66</name>
    <name type="ordered locus">Rv3738c</name>
</gene>
<keyword id="KW-1003">Cell membrane</keyword>
<keyword id="KW-0472">Membrane</keyword>
<keyword id="KW-1185">Reference proteome</keyword>
<keyword id="KW-0812">Transmembrane</keyword>
<keyword id="KW-1133">Transmembrane helix</keyword>
<comment type="subcellular location">
    <subcellularLocation>
        <location evidence="2">Cell membrane</location>
        <topology evidence="2">Multi-pass membrane protein</topology>
    </subcellularLocation>
</comment>
<comment type="similarity">
    <text evidence="2">Belongs to the mycobacterial PPE family.</text>
</comment>
<feature type="chain" id="PRO_0000379592" description="Uncharacterized PPE family protein PPE66">
    <location>
        <begin position="1"/>
        <end position="315"/>
    </location>
</feature>
<feature type="transmembrane region" description="Helical" evidence="1">
    <location>
        <begin position="81"/>
        <end position="101"/>
    </location>
</feature>
<feature type="transmembrane region" description="Helical" evidence="1">
    <location>
        <begin position="106"/>
        <end position="126"/>
    </location>
</feature>
<feature type="transmembrane region" description="Helical" evidence="1">
    <location>
        <begin position="133"/>
        <end position="153"/>
    </location>
</feature>
<dbReference type="EMBL" id="AL123456">
    <property type="protein sequence ID" value="CCP46565.1"/>
    <property type="molecule type" value="Genomic_DNA"/>
</dbReference>
<dbReference type="PIR" id="C70798">
    <property type="entry name" value="C70798"/>
</dbReference>
<dbReference type="RefSeq" id="WP_003899661.1">
    <property type="nucleotide sequence ID" value="NC_000962.3"/>
</dbReference>
<dbReference type="RefSeq" id="YP_178009.1">
    <property type="nucleotide sequence ID" value="NC_000962.3"/>
</dbReference>
<dbReference type="SMR" id="P9WHX1"/>
<dbReference type="STRING" id="83332.Rv3738c"/>
<dbReference type="PaxDb" id="83332-Rv3738c"/>
<dbReference type="DNASU" id="886262"/>
<dbReference type="GeneID" id="886262"/>
<dbReference type="KEGG" id="mtu:Rv3738c"/>
<dbReference type="KEGG" id="mtv:RVBD_3738c"/>
<dbReference type="PATRIC" id="fig|83332.111.peg.4158"/>
<dbReference type="TubercuList" id="Rv3738c"/>
<dbReference type="eggNOG" id="COG5651">
    <property type="taxonomic scope" value="Bacteria"/>
</dbReference>
<dbReference type="InParanoid" id="P9WHX1"/>
<dbReference type="OrthoDB" id="4728682at2"/>
<dbReference type="PhylomeDB" id="P9WHX1"/>
<dbReference type="Proteomes" id="UP000001584">
    <property type="component" value="Chromosome"/>
</dbReference>
<dbReference type="GO" id="GO:0005886">
    <property type="term" value="C:plasma membrane"/>
    <property type="evidence" value="ECO:0007669"/>
    <property type="project" value="UniProtKB-SubCell"/>
</dbReference>
<dbReference type="GO" id="GO:0052572">
    <property type="term" value="P:response to host immune response"/>
    <property type="evidence" value="ECO:0000318"/>
    <property type="project" value="GO_Central"/>
</dbReference>
<dbReference type="Gene3D" id="1.20.1260.20">
    <property type="entry name" value="PPE superfamily"/>
    <property type="match status" value="1"/>
</dbReference>
<dbReference type="InterPro" id="IPR043641">
    <property type="entry name" value="PPE-PPW_C"/>
</dbReference>
<dbReference type="InterPro" id="IPR000030">
    <property type="entry name" value="PPE_dom"/>
</dbReference>
<dbReference type="InterPro" id="IPR038332">
    <property type="entry name" value="PPE_sf"/>
</dbReference>
<dbReference type="PANTHER" id="PTHR46766">
    <property type="entry name" value="GLUTAMINE-RICH PROTEIN 2"/>
    <property type="match status" value="1"/>
</dbReference>
<dbReference type="PANTHER" id="PTHR46766:SF1">
    <property type="entry name" value="GLUTAMINE-RICH PROTEIN 2"/>
    <property type="match status" value="1"/>
</dbReference>
<dbReference type="Pfam" id="PF00823">
    <property type="entry name" value="PPE"/>
    <property type="match status" value="1"/>
</dbReference>
<dbReference type="Pfam" id="PF18878">
    <property type="entry name" value="PPE-PPW"/>
    <property type="match status" value="1"/>
</dbReference>
<dbReference type="SUPFAM" id="SSF140459">
    <property type="entry name" value="PE/PPE dimer-like"/>
    <property type="match status" value="1"/>
</dbReference>
<organism>
    <name type="scientific">Mycobacterium tuberculosis (strain ATCC 25618 / H37Rv)</name>
    <dbReference type="NCBI Taxonomy" id="83332"/>
    <lineage>
        <taxon>Bacteria</taxon>
        <taxon>Bacillati</taxon>
        <taxon>Actinomycetota</taxon>
        <taxon>Actinomycetes</taxon>
        <taxon>Mycobacteriales</taxon>
        <taxon>Mycobacteriaceae</taxon>
        <taxon>Mycobacterium</taxon>
        <taxon>Mycobacterium tuberculosis complex</taxon>
    </lineage>
</organism>
<protein>
    <recommendedName>
        <fullName>Uncharacterized PPE family protein PPE66</fullName>
    </recommendedName>
</protein>
<proteinExistence type="inferred from homology"/>
<name>PPE66_MYCTU</name>
<evidence type="ECO:0000255" key="1"/>
<evidence type="ECO:0000305" key="2"/>
<sequence length="315" mass="31436">MTTAYASALAAMPTLTELAANHTSHAVLLGTNFFGINTIPIALNEADYARMWIQAATTMSIYEGTSDAALASAPQTTPAPVLFNGGAGVASALPAISAATLDPASIIGIIIEILIQLFLISLEILFAIVAYTIIIVLILPLVIFAYAIVFAVLAIIFGPPLLVIASPFVLTGSVIAVPTSLSTSLSTAVPIGVGQYLADLASADAQAIEVGLKTADVAPVAVRPAAAPPLRESAAVRPEARLVSAVAPAPAGTSASVLASDRGAGVLGFAGTAGKESVGRPAGLTTLAGGEFGGSPSVPMVPASWEQLVGAGEAG</sequence>